<proteinExistence type="evidence at protein level"/>
<organism evidence="9">
    <name type="scientific">Brassica napus</name>
    <name type="common">Rape</name>
    <dbReference type="NCBI Taxonomy" id="3708"/>
    <lineage>
        <taxon>Eukaryota</taxon>
        <taxon>Viridiplantae</taxon>
        <taxon>Streptophyta</taxon>
        <taxon>Embryophyta</taxon>
        <taxon>Tracheophyta</taxon>
        <taxon>Spermatophyta</taxon>
        <taxon>Magnoliopsida</taxon>
        <taxon>eudicotyledons</taxon>
        <taxon>Gunneridae</taxon>
        <taxon>Pentapetalae</taxon>
        <taxon>rosids</taxon>
        <taxon>malvids</taxon>
        <taxon>Brassicales</taxon>
        <taxon>Brassicaceae</taxon>
        <taxon>Brassiceae</taxon>
        <taxon>Brassica</taxon>
    </lineage>
</organism>
<reference key="1">
    <citation type="journal article" date="2006" name="J. Biochem. Mol. Biol.">
        <title>Isolation and expression analysis of a GDSL-like lipase gene from Brassica napus L.</title>
        <authorList>
            <person name="Ling H."/>
            <person name="Zhao J."/>
            <person name="Zuo K."/>
            <person name="Qiu C."/>
            <person name="Yao H."/>
            <person name="Qin J."/>
            <person name="Sun X."/>
            <person name="Tang K."/>
        </authorList>
    </citation>
    <scope>NUCLEOTIDE SEQUENCE [MRNA]</scope>
    <scope>TISSUE SPECIFICITY</scope>
    <scope>DEVELOPMENTAL STAGE</scope>
</reference>
<reference key="2">
    <citation type="journal article" date="2008" name="Plant J.">
        <title>Role of a GDSL lipase-like protein as sinapine esterase in Brassicaceae.</title>
        <authorList>
            <person name="Clauss K."/>
            <person name="Baumert A."/>
            <person name="Nimtz M."/>
            <person name="Milkowski C."/>
            <person name="Strack D."/>
        </authorList>
    </citation>
    <scope>IDENTIFICATION BY MASS SPECTROMETRY</scope>
    <scope>FUNCTION</scope>
    <scope>CATALYTIC ACTIVITY</scope>
    <scope>ACTIVITY REGULATION</scope>
</reference>
<reference key="3">
    <citation type="journal article" date="2011" name="Plant Physiol.">
        <title>Overexpression of sinapine esterase BnSCE3 in oilseed rape seeds triggers global changes in seed metabolism.</title>
        <authorList>
            <person name="Clauss K."/>
            <person name="von Roepenack-Lahaye E."/>
            <person name="Boettcher C."/>
            <person name="Roth M.R."/>
            <person name="Welti R."/>
            <person name="Erban A."/>
            <person name="Kopka J."/>
            <person name="Scheel D."/>
            <person name="Milkowski C."/>
            <person name="Strack D."/>
        </authorList>
    </citation>
    <scope>FUNCTION</scope>
    <scope>OVEREXPRESSION</scope>
</reference>
<comment type="function">
    <text evidence="5 6">Sinapine esterase that catalyzes that hydrolysis of sinapine, releasing choline and sinapate. Sinapine (O-sinapoylcholine) is the predominant phenolic compound in a complex group of sinapate esters in seeds of oilseed rape (B.napus). Sinapine has antinutritive activity and prevents the use of seed protein for food and feed. Shows broad substrate specificity towards various other choline esters, including phosphatidylcholine.</text>
</comment>
<comment type="catalytic activity">
    <reaction evidence="5">
        <text>O-sinapoylcholine + H2O = (E)-sinapate + choline + H(+)</text>
        <dbReference type="Rhea" id="RHEA:10016"/>
        <dbReference type="ChEBI" id="CHEBI:15354"/>
        <dbReference type="ChEBI" id="CHEBI:15377"/>
        <dbReference type="ChEBI" id="CHEBI:15378"/>
        <dbReference type="ChEBI" id="CHEBI:16353"/>
        <dbReference type="ChEBI" id="CHEBI:30023"/>
        <dbReference type="EC" id="3.1.1.49"/>
    </reaction>
</comment>
<comment type="activity regulation">
    <text evidence="5">Inhibited by PMSF.</text>
</comment>
<comment type="biophysicochemical properties">
    <kinetics>
        <KM evidence="5">2.6 uM for sinapine</KM>
        <KM evidence="5">11 uM for cinnamoylcholine</KM>
        <KM evidence="5">101 uM for 3-phenylpropionylcholine</KM>
    </kinetics>
</comment>
<comment type="subcellular location">
    <subcellularLocation>
        <location evidence="8">Secreted</location>
    </subcellularLocation>
</comment>
<comment type="tissue specificity">
    <text evidence="4">Expressed in most tissues or organs of the mature seedlings. Not expressed in roots of mature seedlings.</text>
</comment>
<comment type="developmental stage">
    <text evidence="4">Expressed during reproductive growth and strongly expressed during seed germination. Expression is not detected until 3 days after germination, and subsequently becomes stronger. Not present in root of seedlings growing at different stages.</text>
</comment>
<comment type="miscellaneous">
    <text evidence="6">Overexpression in seeds induces a strong decrease of sinapine levels together with an increase of choline. Seeds display higher weight, size and water content and a fraction of seeds display morphological alterations, characterized by large cavities near the embryonic tissue. Seed quality parameters, such as fiber and glucosinolate levels, and agronomically important traits, such as oil and protein contents, differ only slightly, except that amounts of hemicellulose and cellulose are higher. Seedlings are larger and young seedlings exhibit longer hypocotyls. Metabolic profiles of transgenic seeds indicate that, besides suppression of sinapine accumulation, other differences in primary and secondary metabolism are observed.</text>
</comment>
<comment type="similarity">
    <text evidence="8">Belongs to the 'GDSL' lipolytic enzyme family.</text>
</comment>
<dbReference type="EC" id="3.1.1.49" evidence="5"/>
<dbReference type="EMBL" id="AY870270">
    <property type="protein sequence ID" value="AAX58135.1"/>
    <property type="molecule type" value="mRNA"/>
</dbReference>
<dbReference type="RefSeq" id="NP_001302718.1">
    <property type="nucleotide sequence ID" value="NM_001315789.1"/>
</dbReference>
<dbReference type="SMR" id="Q3ZFI4"/>
<dbReference type="GeneID" id="106358067"/>
<dbReference type="KEGG" id="bna:106358067"/>
<dbReference type="OrthoDB" id="1600564at2759"/>
<dbReference type="BRENDA" id="3.1.1.49">
    <property type="organism ID" value="944"/>
</dbReference>
<dbReference type="SABIO-RK" id="Q3ZFI4"/>
<dbReference type="GO" id="GO:0005576">
    <property type="term" value="C:extracellular region"/>
    <property type="evidence" value="ECO:0007669"/>
    <property type="project" value="UniProtKB-SubCell"/>
</dbReference>
<dbReference type="GO" id="GO:0050285">
    <property type="term" value="F:sinapine esterase activity"/>
    <property type="evidence" value="ECO:0000314"/>
    <property type="project" value="UniProtKB"/>
</dbReference>
<dbReference type="CDD" id="cd01837">
    <property type="entry name" value="SGNH_plant_lipase_like"/>
    <property type="match status" value="1"/>
</dbReference>
<dbReference type="FunFam" id="3.40.50.1110:FF:000024">
    <property type="entry name" value="GDSL esterase/lipase At1g31550"/>
    <property type="match status" value="1"/>
</dbReference>
<dbReference type="Gene3D" id="3.40.50.1110">
    <property type="entry name" value="SGNH hydrolase"/>
    <property type="match status" value="1"/>
</dbReference>
<dbReference type="InterPro" id="IPR001087">
    <property type="entry name" value="GDSL"/>
</dbReference>
<dbReference type="InterPro" id="IPR036514">
    <property type="entry name" value="SGNH_hydro_sf"/>
</dbReference>
<dbReference type="InterPro" id="IPR035669">
    <property type="entry name" value="SGNH_plant_lipase-like"/>
</dbReference>
<dbReference type="PANTHER" id="PTHR22835:SF543">
    <property type="entry name" value="GENOME ASSEMBLY, CHROMOSOME: A07"/>
    <property type="match status" value="1"/>
</dbReference>
<dbReference type="PANTHER" id="PTHR22835">
    <property type="entry name" value="ZINC FINGER FYVE DOMAIN CONTAINING PROTEIN"/>
    <property type="match status" value="1"/>
</dbReference>
<dbReference type="Pfam" id="PF00657">
    <property type="entry name" value="Lipase_GDSL"/>
    <property type="match status" value="1"/>
</dbReference>
<dbReference type="SUPFAM" id="SSF52266">
    <property type="entry name" value="SGNH hydrolase"/>
    <property type="match status" value="1"/>
</dbReference>
<name>SCE3_BRANA</name>
<sequence>MASSLKKLITSFLLFFFYTIIVASSEPSCRRYKSIISFGDSIADTGNYLHLSDVNHPPQAAFLPYGETFFSVPTGRDSDGRLIIDFIAEFLGLPYVPPYFGSQNVSFEQGVNFAVYGATALDRAFFIEKGIVSDFTNVSLSVQLNTFKQILPTLCASSSRDCREMLGDSLILMGESGGNDYNYPFFEDKSINEIKELTPLIIKAISDAIVDLIDLGGKTFLVPGSFPVGCSAAYLTLFQTAKEKDYDPLTGCLPWLNDFGKHHDEQLKTEIRRLRKLYPHVNIMYADYYNSLYRLYQKPTKYGFKNRPLAACCGVGGQYNFTIGEECGYEGVGYCQNPSEYINWDGYHITEAAHQKMAHGILNGPYATPAFNWSCLDAASVDNESSFGS</sequence>
<accession>Q3ZFI4</accession>
<feature type="signal peptide" evidence="2">
    <location>
        <begin position="1"/>
        <end position="25"/>
    </location>
</feature>
<feature type="chain" id="PRO_0000430709" description="Sinapine esterase">
    <location>
        <begin position="26"/>
        <end position="389"/>
    </location>
</feature>
<feature type="active site" description="Nucleophile" evidence="1">
    <location>
        <position position="41"/>
    </location>
</feature>
<feature type="active site" evidence="1">
    <location>
        <position position="345"/>
    </location>
</feature>
<feature type="active site" evidence="1">
    <location>
        <position position="348"/>
    </location>
</feature>
<feature type="glycosylation site" description="N-linked (GlcNAc...) asparagine" evidence="3">
    <location>
        <position position="104"/>
    </location>
</feature>
<feature type="glycosylation site" description="N-linked (GlcNAc...) asparagine" evidence="3">
    <location>
        <position position="137"/>
    </location>
</feature>
<feature type="glycosylation site" description="N-linked (GlcNAc...) asparagine" evidence="3">
    <location>
        <position position="320"/>
    </location>
</feature>
<feature type="glycosylation site" description="N-linked (GlcNAc...) asparagine" evidence="3">
    <location>
        <position position="372"/>
    </location>
</feature>
<feature type="glycosylation site" description="N-linked (GlcNAc...) asparagine" evidence="3">
    <location>
        <position position="383"/>
    </location>
</feature>
<evidence type="ECO:0000250" key="1">
    <source>
        <dbReference type="UniProtKB" id="Q00017"/>
    </source>
</evidence>
<evidence type="ECO:0000255" key="2"/>
<evidence type="ECO:0000255" key="3">
    <source>
        <dbReference type="PROSITE-ProRule" id="PRU00498"/>
    </source>
</evidence>
<evidence type="ECO:0000269" key="4">
    <source>
    </source>
</evidence>
<evidence type="ECO:0000269" key="5">
    <source>
    </source>
</evidence>
<evidence type="ECO:0000269" key="6">
    <source>
    </source>
</evidence>
<evidence type="ECO:0000303" key="7">
    <source>
    </source>
</evidence>
<evidence type="ECO:0000305" key="8"/>
<evidence type="ECO:0000312" key="9">
    <source>
        <dbReference type="EMBL" id="AAX58135.1"/>
    </source>
</evidence>
<keyword id="KW-0325">Glycoprotein</keyword>
<keyword id="KW-0378">Hydrolase</keyword>
<keyword id="KW-0964">Secreted</keyword>
<keyword id="KW-0732">Signal</keyword>
<protein>
    <recommendedName>
        <fullName evidence="8">Sinapine esterase</fullName>
        <shortName evidence="7">BnSCE3</shortName>
        <ecNumber evidence="5">3.1.1.49</ecNumber>
    </recommendedName>
    <alternativeName>
        <fullName evidence="7">Lipase 2</fullName>
        <shortName evidence="7">BnLIP2</shortName>
    </alternativeName>
</protein>